<evidence type="ECO:0000250" key="1">
    <source>
        <dbReference type="UniProtKB" id="P0A707"/>
    </source>
</evidence>
<evidence type="ECO:0000255" key="2"/>
<evidence type="ECO:0000256" key="3">
    <source>
        <dbReference type="SAM" id="MobiDB-lite"/>
    </source>
</evidence>
<evidence type="ECO:0000269" key="4">
    <source>
    </source>
</evidence>
<evidence type="ECO:0000303" key="5">
    <source>
    </source>
</evidence>
<evidence type="ECO:0000305" key="6"/>
<evidence type="ECO:0000312" key="7">
    <source>
        <dbReference type="Araport" id="AT1G34360"/>
    </source>
</evidence>
<evidence type="ECO:0000312" key="8">
    <source>
        <dbReference type="EMBL" id="AAG51900.1"/>
    </source>
</evidence>
<gene>
    <name evidence="5" type="primary">IF3-1</name>
    <name evidence="7" type="ordered locus">At1g34360</name>
    <name evidence="8" type="ORF">F7P12.8</name>
</gene>
<reference key="1">
    <citation type="journal article" date="2000" name="Nature">
        <title>Sequence and analysis of chromosome 1 of the plant Arabidopsis thaliana.</title>
        <authorList>
            <person name="Theologis A."/>
            <person name="Ecker J.R."/>
            <person name="Palm C.J."/>
            <person name="Federspiel N.A."/>
            <person name="Kaul S."/>
            <person name="White O."/>
            <person name="Alonso J."/>
            <person name="Altafi H."/>
            <person name="Araujo R."/>
            <person name="Bowman C.L."/>
            <person name="Brooks S.Y."/>
            <person name="Buehler E."/>
            <person name="Chan A."/>
            <person name="Chao Q."/>
            <person name="Chen H."/>
            <person name="Cheuk R.F."/>
            <person name="Chin C.W."/>
            <person name="Chung M.K."/>
            <person name="Conn L."/>
            <person name="Conway A.B."/>
            <person name="Conway A.R."/>
            <person name="Creasy T.H."/>
            <person name="Dewar K."/>
            <person name="Dunn P."/>
            <person name="Etgu P."/>
            <person name="Feldblyum T.V."/>
            <person name="Feng J.-D."/>
            <person name="Fong B."/>
            <person name="Fujii C.Y."/>
            <person name="Gill J.E."/>
            <person name="Goldsmith A.D."/>
            <person name="Haas B."/>
            <person name="Hansen N.F."/>
            <person name="Hughes B."/>
            <person name="Huizar L."/>
            <person name="Hunter J.L."/>
            <person name="Jenkins J."/>
            <person name="Johnson-Hopson C."/>
            <person name="Khan S."/>
            <person name="Khaykin E."/>
            <person name="Kim C.J."/>
            <person name="Koo H.L."/>
            <person name="Kremenetskaia I."/>
            <person name="Kurtz D.B."/>
            <person name="Kwan A."/>
            <person name="Lam B."/>
            <person name="Langin-Hooper S."/>
            <person name="Lee A."/>
            <person name="Lee J.M."/>
            <person name="Lenz C.A."/>
            <person name="Li J.H."/>
            <person name="Li Y.-P."/>
            <person name="Lin X."/>
            <person name="Liu S.X."/>
            <person name="Liu Z.A."/>
            <person name="Luros J.S."/>
            <person name="Maiti R."/>
            <person name="Marziali A."/>
            <person name="Militscher J."/>
            <person name="Miranda M."/>
            <person name="Nguyen M."/>
            <person name="Nierman W.C."/>
            <person name="Osborne B.I."/>
            <person name="Pai G."/>
            <person name="Peterson J."/>
            <person name="Pham P.K."/>
            <person name="Rizzo M."/>
            <person name="Rooney T."/>
            <person name="Rowley D."/>
            <person name="Sakano H."/>
            <person name="Salzberg S.L."/>
            <person name="Schwartz J.R."/>
            <person name="Shinn P."/>
            <person name="Southwick A.M."/>
            <person name="Sun H."/>
            <person name="Tallon L.J."/>
            <person name="Tambunga G."/>
            <person name="Toriumi M.J."/>
            <person name="Town C.D."/>
            <person name="Utterback T."/>
            <person name="Van Aken S."/>
            <person name="Vaysberg M."/>
            <person name="Vysotskaia V.S."/>
            <person name="Walker M."/>
            <person name="Wu D."/>
            <person name="Yu G."/>
            <person name="Fraser C.M."/>
            <person name="Venter J.C."/>
            <person name="Davis R.W."/>
        </authorList>
    </citation>
    <scope>NUCLEOTIDE SEQUENCE [LARGE SCALE GENOMIC DNA]</scope>
    <source>
        <strain>cv. Columbia</strain>
    </source>
</reference>
<reference key="2">
    <citation type="journal article" date="2017" name="Plant J.">
        <title>Araport11: a complete reannotation of the Arabidopsis thaliana reference genome.</title>
        <authorList>
            <person name="Cheng C.Y."/>
            <person name="Krishnakumar V."/>
            <person name="Chan A.P."/>
            <person name="Thibaud-Nissen F."/>
            <person name="Schobel S."/>
            <person name="Town C.D."/>
        </authorList>
    </citation>
    <scope>GENOME REANNOTATION</scope>
    <source>
        <strain>cv. Columbia</strain>
    </source>
</reference>
<reference key="3">
    <citation type="submission" date="2004-03" db="EMBL/GenBank/DDBJ databases">
        <title>Arabidopsis ORF clones.</title>
        <authorList>
            <person name="Cheuk R.F."/>
            <person name="Chen H."/>
            <person name="Kim C.J."/>
            <person name="Shinn P."/>
            <person name="Carninci P."/>
            <person name="Hayashizaki Y."/>
            <person name="Ishida J."/>
            <person name="Kamiya A."/>
            <person name="Kawai J."/>
            <person name="Narusaka M."/>
            <person name="Sakurai T."/>
            <person name="Satou M."/>
            <person name="Seki M."/>
            <person name="Shinozaki K."/>
            <person name="Ecker J.R."/>
        </authorList>
    </citation>
    <scope>NUCLEOTIDE SEQUENCE [LARGE SCALE MRNA]</scope>
    <source>
        <strain>cv. Columbia</strain>
    </source>
</reference>
<reference key="4">
    <citation type="journal article" date="2015" name="Photosyn. Res.">
        <title>Translation initiation factor 3 families: what are their roles in regulating cyanobacterial and chloroplast gene expression?</title>
        <authorList>
            <person name="Nesbit A.D."/>
            <person name="Whippo C."/>
            <person name="Hangarter R.P."/>
            <person name="Kehoe D.M."/>
        </authorList>
    </citation>
    <scope>SUBCELLULAR LOCATION</scope>
</reference>
<feature type="transit peptide" description="Mitochondrion" evidence="2">
    <location>
        <begin position="1"/>
        <end position="66"/>
    </location>
</feature>
<feature type="chain" id="PRO_0000439375" description="Translation initiation factor IF3-1, mitochondrial">
    <location>
        <begin position="67"/>
        <end position="520"/>
    </location>
</feature>
<feature type="region of interest" description="Disordered" evidence="3">
    <location>
        <begin position="271"/>
        <end position="520"/>
    </location>
</feature>
<feature type="compositionally biased region" description="Basic and acidic residues" evidence="3">
    <location>
        <begin position="271"/>
        <end position="282"/>
    </location>
</feature>
<feature type="compositionally biased region" description="Polar residues" evidence="3">
    <location>
        <begin position="336"/>
        <end position="361"/>
    </location>
</feature>
<feature type="compositionally biased region" description="Pro residues" evidence="3">
    <location>
        <begin position="369"/>
        <end position="379"/>
    </location>
</feature>
<feature type="compositionally biased region" description="Polar residues" evidence="3">
    <location>
        <begin position="404"/>
        <end position="422"/>
    </location>
</feature>
<feature type="compositionally biased region" description="Polar residues" evidence="3">
    <location>
        <begin position="458"/>
        <end position="468"/>
    </location>
</feature>
<feature type="compositionally biased region" description="Pro residues" evidence="3">
    <location>
        <begin position="473"/>
        <end position="485"/>
    </location>
</feature>
<accession>Q6NLP2</accession>
<accession>Q9C8N4</accession>
<name>IF31_ARATH</name>
<protein>
    <recommendedName>
        <fullName evidence="6">Translation initiation factor IF3-1, mitochondrial</fullName>
        <shortName evidence="5">AtIF3-1</shortName>
    </recommendedName>
    <alternativeName>
        <fullName evidence="5">AtINFC-1</fullName>
    </alternativeName>
</protein>
<comment type="function">
    <text evidence="1">IF-3 binds to the 30S ribosomal subunit and shifts the equilibrium between 70S ribosomes and their 50S and 30S subunits in favor of the free subunits, thus enhancing the availability of 30S subunits on which protein synthesis initiation begins.</text>
</comment>
<comment type="subunit">
    <text evidence="1">Monomer.</text>
</comment>
<comment type="subcellular location">
    <subcellularLocation>
        <location evidence="4">Mitochondrion</location>
    </subcellularLocation>
</comment>
<comment type="similarity">
    <text evidence="6">Belongs to the IF-3 family.</text>
</comment>
<comment type="sequence caution" evidence="6">
    <conflict type="erroneous gene model prediction">
        <sequence resource="EMBL-CDS" id="AAG51900"/>
    </conflict>
</comment>
<keyword id="KW-0396">Initiation factor</keyword>
<keyword id="KW-0496">Mitochondrion</keyword>
<keyword id="KW-0648">Protein biosynthesis</keyword>
<keyword id="KW-1185">Reference proteome</keyword>
<keyword id="KW-0809">Transit peptide</keyword>
<proteinExistence type="evidence at transcript level"/>
<organism>
    <name type="scientific">Arabidopsis thaliana</name>
    <name type="common">Mouse-ear cress</name>
    <dbReference type="NCBI Taxonomy" id="3702"/>
    <lineage>
        <taxon>Eukaryota</taxon>
        <taxon>Viridiplantae</taxon>
        <taxon>Streptophyta</taxon>
        <taxon>Embryophyta</taxon>
        <taxon>Tracheophyta</taxon>
        <taxon>Spermatophyta</taxon>
        <taxon>Magnoliopsida</taxon>
        <taxon>eudicotyledons</taxon>
        <taxon>Gunneridae</taxon>
        <taxon>Pentapetalae</taxon>
        <taxon>rosids</taxon>
        <taxon>malvids</taxon>
        <taxon>Brassicales</taxon>
        <taxon>Brassicaceae</taxon>
        <taxon>Camelineae</taxon>
        <taxon>Arabidopsis</taxon>
    </lineage>
</organism>
<dbReference type="EMBL" id="AC023913">
    <property type="protein sequence ID" value="AAG51900.1"/>
    <property type="status" value="ALT_SEQ"/>
    <property type="molecule type" value="Genomic_DNA"/>
</dbReference>
<dbReference type="EMBL" id="CP002684">
    <property type="protein sequence ID" value="AEE31702.1"/>
    <property type="molecule type" value="Genomic_DNA"/>
</dbReference>
<dbReference type="EMBL" id="BT012288">
    <property type="protein sequence ID" value="AAS76775.1"/>
    <property type="molecule type" value="mRNA"/>
</dbReference>
<dbReference type="PIR" id="H86467">
    <property type="entry name" value="H86467"/>
</dbReference>
<dbReference type="RefSeq" id="NP_174696.2">
    <property type="nucleotide sequence ID" value="NM_103159.4"/>
</dbReference>
<dbReference type="SMR" id="Q6NLP2"/>
<dbReference type="FunCoup" id="Q6NLP2">
    <property type="interactions" value="653"/>
</dbReference>
<dbReference type="STRING" id="3702.Q6NLP2"/>
<dbReference type="PaxDb" id="3702-AT1G34360.1"/>
<dbReference type="EnsemblPlants" id="AT1G34360.1">
    <property type="protein sequence ID" value="AT1G34360.1"/>
    <property type="gene ID" value="AT1G34360"/>
</dbReference>
<dbReference type="GeneID" id="840338"/>
<dbReference type="Gramene" id="AT1G34360.1">
    <property type="protein sequence ID" value="AT1G34360.1"/>
    <property type="gene ID" value="AT1G34360"/>
</dbReference>
<dbReference type="KEGG" id="ath:AT1G34360"/>
<dbReference type="Araport" id="AT1G34360"/>
<dbReference type="TAIR" id="AT1G34360">
    <property type="gene designation" value="ATINFC-1"/>
</dbReference>
<dbReference type="eggNOG" id="ENOG502QWD8">
    <property type="taxonomic scope" value="Eukaryota"/>
</dbReference>
<dbReference type="HOGENOM" id="CLU_524159_0_0_1"/>
<dbReference type="InParanoid" id="Q6NLP2"/>
<dbReference type="PhylomeDB" id="Q6NLP2"/>
<dbReference type="CD-CODE" id="4299E36E">
    <property type="entry name" value="Nucleolus"/>
</dbReference>
<dbReference type="PRO" id="PR:Q6NLP2"/>
<dbReference type="Proteomes" id="UP000006548">
    <property type="component" value="Chromosome 1"/>
</dbReference>
<dbReference type="ExpressionAtlas" id="Q6NLP2">
    <property type="expression patterns" value="baseline and differential"/>
</dbReference>
<dbReference type="GO" id="GO:0005739">
    <property type="term" value="C:mitochondrion"/>
    <property type="evidence" value="ECO:0000314"/>
    <property type="project" value="UniProtKB"/>
</dbReference>
<dbReference type="GO" id="GO:0003743">
    <property type="term" value="F:translation initiation factor activity"/>
    <property type="evidence" value="ECO:0007669"/>
    <property type="project" value="UniProtKB-KW"/>
</dbReference>
<dbReference type="Gene3D" id="3.30.110.10">
    <property type="entry name" value="Translation initiation factor 3 (IF-3), C-terminal domain"/>
    <property type="match status" value="1"/>
</dbReference>
<dbReference type="Gene3D" id="3.10.20.80">
    <property type="entry name" value="Translation initiation factor 3 (IF-3), N-terminal domain"/>
    <property type="match status" value="1"/>
</dbReference>
<dbReference type="InterPro" id="IPR036788">
    <property type="entry name" value="T_IF-3_C_sf"/>
</dbReference>
<dbReference type="InterPro" id="IPR036787">
    <property type="entry name" value="T_IF-3_N_sf"/>
</dbReference>
<dbReference type="InterPro" id="IPR001288">
    <property type="entry name" value="Translation_initiation_fac_3"/>
</dbReference>
<dbReference type="InterPro" id="IPR019814">
    <property type="entry name" value="Translation_initiation_fac_3_N"/>
</dbReference>
<dbReference type="NCBIfam" id="TIGR00168">
    <property type="entry name" value="infC"/>
    <property type="match status" value="1"/>
</dbReference>
<dbReference type="PANTHER" id="PTHR10938">
    <property type="entry name" value="TRANSLATION INITIATION FACTOR IF-3"/>
    <property type="match status" value="1"/>
</dbReference>
<dbReference type="PANTHER" id="PTHR10938:SF4">
    <property type="entry name" value="TRANSLATION INITIATION FACTOR IF3-1, MITOCHONDRIAL"/>
    <property type="match status" value="1"/>
</dbReference>
<dbReference type="Pfam" id="PF05198">
    <property type="entry name" value="IF3_N"/>
    <property type="match status" value="1"/>
</dbReference>
<dbReference type="SUPFAM" id="SSF55200">
    <property type="entry name" value="Translation initiation factor IF3, C-terminal domain"/>
    <property type="match status" value="1"/>
</dbReference>
<dbReference type="SUPFAM" id="SSF54364">
    <property type="entry name" value="Translation initiation factor IF3, N-terminal domain"/>
    <property type="match status" value="1"/>
</dbReference>
<sequence length="520" mass="58582">MAIWRIINRSYLKYASNQLTRNYYTQVCLASSTHVVKQTTKLSSFDIPNSDICTRPSNIFQNLRFLATSAQTRKKEAEVDSDGPRLNEKITGDYVRLVSEEGHCVVSLREALRRAKELQCDLVEVQRDAKPPVCKIVKYSLELYKKAKVGKERAKAKRAEAIRPDIKEIRFTPKIEAKDLKFKSDQALKLMESGYRVKCLAVPDKDKHKELEPEKLLELLFRFTCFIGDALVESWPEADRKGAVVIVRHAKFGPPKKGGVKLMKDIDIKSARVKEESPKPDSSKAGVATVDDQEDIEKSEPRFSVEQAQPVKFQNAYAKREPSSEFSGGRDASRFEPQSPNQHVNPQRPRFSNQAPNQQPTGRFDPQSPNQPPSAPRPQFPNQQPTGRFDPQFPSQPPRPQFPNQAPNQQSTGRFNPQFPNQRPSPPQSRFPDQAPNQQPSGPSPNRHPDRQGPPPRFQNQAPNQQPTGRFEPQPPNPPRAPPRPQTRLPNETSNEQPTAPGRSSGPASGYGIFSTPKTK</sequence>